<proteinExistence type="evidence at protein level"/>
<accession>P10152</accession>
<accession>Q9GKP9</accession>
<evidence type="ECO:0000250" key="1">
    <source>
        <dbReference type="UniProtKB" id="P03950"/>
    </source>
</evidence>
<evidence type="ECO:0000250" key="2">
    <source>
        <dbReference type="UniProtKB" id="P21570"/>
    </source>
</evidence>
<evidence type="ECO:0000269" key="3">
    <source>
    </source>
</evidence>
<evidence type="ECO:0000269" key="4">
    <source>
    </source>
</evidence>
<evidence type="ECO:0000269" key="5">
    <source>
    </source>
</evidence>
<evidence type="ECO:0000269" key="6">
    <source>
    </source>
</evidence>
<evidence type="ECO:0000269" key="7">
    <source>
    </source>
</evidence>
<evidence type="ECO:0000305" key="8"/>
<evidence type="ECO:0007744" key="9">
    <source>
        <dbReference type="PDB" id="1AGI"/>
    </source>
</evidence>
<evidence type="ECO:0007744" key="10">
    <source>
        <dbReference type="PDB" id="1GIO"/>
    </source>
</evidence>
<evidence type="ECO:0007829" key="11">
    <source>
        <dbReference type="PDB" id="1AGI"/>
    </source>
</evidence>
<dbReference type="EC" id="3.1.27.-" evidence="1"/>
<dbReference type="EMBL" id="AF135124">
    <property type="protein sequence ID" value="AAG47631.1"/>
    <property type="molecule type" value="Genomic_DNA"/>
</dbReference>
<dbReference type="PDB" id="1AGI">
    <property type="method" value="X-ray"/>
    <property type="resolution" value="1.50 A"/>
    <property type="chains" value="A=24-148"/>
</dbReference>
<dbReference type="PDB" id="1GIO">
    <property type="method" value="NMR"/>
    <property type="chains" value="A=24-148"/>
</dbReference>
<dbReference type="PDBsum" id="1AGI"/>
<dbReference type="PDBsum" id="1GIO"/>
<dbReference type="SMR" id="P10152"/>
<dbReference type="FunCoup" id="P10152">
    <property type="interactions" value="130"/>
</dbReference>
<dbReference type="STRING" id="9913.ENSBTAP00000070495"/>
<dbReference type="PaxDb" id="9913-ENSBTAP00000026126"/>
<dbReference type="eggNOG" id="ENOG502S9Q1">
    <property type="taxonomic scope" value="Eukaryota"/>
</dbReference>
<dbReference type="InParanoid" id="P10152"/>
<dbReference type="EvolutionaryTrace" id="P10152"/>
<dbReference type="Proteomes" id="UP000009136">
    <property type="component" value="Unplaced"/>
</dbReference>
<dbReference type="GO" id="GO:0032311">
    <property type="term" value="C:angiogenin-PRI complex"/>
    <property type="evidence" value="ECO:0000250"/>
    <property type="project" value="UniProtKB"/>
</dbReference>
<dbReference type="GO" id="GO:0005604">
    <property type="term" value="C:basement membrane"/>
    <property type="evidence" value="ECO:0000250"/>
    <property type="project" value="UniProtKB"/>
</dbReference>
<dbReference type="GO" id="GO:0010494">
    <property type="term" value="C:cytoplasmic stress granule"/>
    <property type="evidence" value="ECO:0007669"/>
    <property type="project" value="UniProtKB-SubCell"/>
</dbReference>
<dbReference type="GO" id="GO:0005615">
    <property type="term" value="C:extracellular space"/>
    <property type="evidence" value="ECO:0000314"/>
    <property type="project" value="UniProtKB"/>
</dbReference>
<dbReference type="GO" id="GO:0030426">
    <property type="term" value="C:growth cone"/>
    <property type="evidence" value="ECO:0000250"/>
    <property type="project" value="UniProtKB"/>
</dbReference>
<dbReference type="GO" id="GO:0043025">
    <property type="term" value="C:neuronal cell body"/>
    <property type="evidence" value="ECO:0000250"/>
    <property type="project" value="UniProtKB"/>
</dbReference>
<dbReference type="GO" id="GO:0005730">
    <property type="term" value="C:nucleolus"/>
    <property type="evidence" value="ECO:0000250"/>
    <property type="project" value="UniProtKB"/>
</dbReference>
<dbReference type="GO" id="GO:0005634">
    <property type="term" value="C:nucleus"/>
    <property type="evidence" value="ECO:0000250"/>
    <property type="project" value="UniProtKB"/>
</dbReference>
<dbReference type="GO" id="GO:0003779">
    <property type="term" value="F:actin binding"/>
    <property type="evidence" value="ECO:0000314"/>
    <property type="project" value="UniProtKB"/>
</dbReference>
<dbReference type="GO" id="GO:0005507">
    <property type="term" value="F:copper ion binding"/>
    <property type="evidence" value="ECO:0000250"/>
    <property type="project" value="UniProtKB"/>
</dbReference>
<dbReference type="GO" id="GO:0003677">
    <property type="term" value="F:DNA binding"/>
    <property type="evidence" value="ECO:0007669"/>
    <property type="project" value="UniProtKB-KW"/>
</dbReference>
<dbReference type="GO" id="GO:0004519">
    <property type="term" value="F:endonuclease activity"/>
    <property type="evidence" value="ECO:0007669"/>
    <property type="project" value="UniProtKB-KW"/>
</dbReference>
<dbReference type="GO" id="GO:0008201">
    <property type="term" value="F:heparin binding"/>
    <property type="evidence" value="ECO:0000250"/>
    <property type="project" value="UniProtKB"/>
</dbReference>
<dbReference type="GO" id="GO:0004540">
    <property type="term" value="F:RNA nuclease activity"/>
    <property type="evidence" value="ECO:0000314"/>
    <property type="project" value="UniProtKB"/>
</dbReference>
<dbReference type="GO" id="GO:0005102">
    <property type="term" value="F:signaling receptor binding"/>
    <property type="evidence" value="ECO:0000314"/>
    <property type="project" value="UniProtKB"/>
</dbReference>
<dbReference type="GO" id="GO:0030041">
    <property type="term" value="P:actin filament polymerization"/>
    <property type="evidence" value="ECO:0000314"/>
    <property type="project" value="UniProtKB"/>
</dbReference>
<dbReference type="GO" id="GO:0001525">
    <property type="term" value="P:angiogenesis"/>
    <property type="evidence" value="ECO:0000314"/>
    <property type="project" value="UniProtKB"/>
</dbReference>
<dbReference type="GO" id="GO:0019731">
    <property type="term" value="P:antibacterial humoral response"/>
    <property type="evidence" value="ECO:0000318"/>
    <property type="project" value="GO_Central"/>
</dbReference>
<dbReference type="GO" id="GO:0061844">
    <property type="term" value="P:antimicrobial humoral immune response mediated by antimicrobial peptide"/>
    <property type="evidence" value="ECO:0000318"/>
    <property type="project" value="GO_Central"/>
</dbReference>
<dbReference type="GO" id="GO:0030154">
    <property type="term" value="P:cell differentiation"/>
    <property type="evidence" value="ECO:0007669"/>
    <property type="project" value="UniProtKB-KW"/>
</dbReference>
<dbReference type="GO" id="GO:0050830">
    <property type="term" value="P:defense response to Gram-positive bacterium"/>
    <property type="evidence" value="ECO:0000318"/>
    <property type="project" value="GO_Central"/>
</dbReference>
<dbReference type="GO" id="GO:0045087">
    <property type="term" value="P:innate immune response"/>
    <property type="evidence" value="ECO:0000318"/>
    <property type="project" value="GO_Central"/>
</dbReference>
<dbReference type="GO" id="GO:0048662">
    <property type="term" value="P:negative regulation of smooth muscle cell proliferation"/>
    <property type="evidence" value="ECO:0000314"/>
    <property type="project" value="UniProtKB"/>
</dbReference>
<dbReference type="GO" id="GO:0017148">
    <property type="term" value="P:negative regulation of translation"/>
    <property type="evidence" value="ECO:0007669"/>
    <property type="project" value="UniProtKB-KW"/>
</dbReference>
<dbReference type="GO" id="GO:0001541">
    <property type="term" value="P:ovarian follicle development"/>
    <property type="evidence" value="ECO:0000303"/>
    <property type="project" value="UniProtKB"/>
</dbReference>
<dbReference type="GO" id="GO:0001938">
    <property type="term" value="P:positive regulation of endothelial cell proliferation"/>
    <property type="evidence" value="ECO:0000250"/>
    <property type="project" value="UniProtKB"/>
</dbReference>
<dbReference type="GO" id="GO:0050714">
    <property type="term" value="P:positive regulation of protein secretion"/>
    <property type="evidence" value="ECO:0000314"/>
    <property type="project" value="UniProtKB"/>
</dbReference>
<dbReference type="GO" id="GO:0001666">
    <property type="term" value="P:response to hypoxia"/>
    <property type="evidence" value="ECO:0000250"/>
    <property type="project" value="UniProtKB"/>
</dbReference>
<dbReference type="GO" id="GO:0009303">
    <property type="term" value="P:rRNA transcription"/>
    <property type="evidence" value="ECO:0000250"/>
    <property type="project" value="UniProtKB"/>
</dbReference>
<dbReference type="GO" id="GO:0023052">
    <property type="term" value="P:signaling"/>
    <property type="evidence" value="ECO:0000250"/>
    <property type="project" value="UniProtKB"/>
</dbReference>
<dbReference type="CDD" id="cd06265">
    <property type="entry name" value="RNase_A_canonical"/>
    <property type="match status" value="1"/>
</dbReference>
<dbReference type="FunFam" id="3.10.130.10:FF:000001">
    <property type="entry name" value="Ribonuclease pancreatic"/>
    <property type="match status" value="1"/>
</dbReference>
<dbReference type="Gene3D" id="3.10.130.10">
    <property type="entry name" value="Ribonuclease A-like domain"/>
    <property type="match status" value="1"/>
</dbReference>
<dbReference type="InterPro" id="IPR001427">
    <property type="entry name" value="RNaseA"/>
</dbReference>
<dbReference type="InterPro" id="IPR036816">
    <property type="entry name" value="RNaseA-like_dom_sf"/>
</dbReference>
<dbReference type="InterPro" id="IPR023411">
    <property type="entry name" value="RNaseA_AS"/>
</dbReference>
<dbReference type="InterPro" id="IPR023412">
    <property type="entry name" value="RNaseA_domain"/>
</dbReference>
<dbReference type="PANTHER" id="PTHR11437:SF60">
    <property type="entry name" value="ANGIOGENIN"/>
    <property type="match status" value="1"/>
</dbReference>
<dbReference type="PANTHER" id="PTHR11437">
    <property type="entry name" value="RIBONUCLEASE"/>
    <property type="match status" value="1"/>
</dbReference>
<dbReference type="Pfam" id="PF00074">
    <property type="entry name" value="RnaseA"/>
    <property type="match status" value="1"/>
</dbReference>
<dbReference type="PRINTS" id="PR00794">
    <property type="entry name" value="RIBONUCLEASE"/>
</dbReference>
<dbReference type="SMART" id="SM00092">
    <property type="entry name" value="RNAse_Pc"/>
    <property type="match status" value="1"/>
</dbReference>
<dbReference type="SUPFAM" id="SSF54076">
    <property type="entry name" value="RNase A-like"/>
    <property type="match status" value="1"/>
</dbReference>
<dbReference type="PROSITE" id="PS00127">
    <property type="entry name" value="RNASE_PANCREATIC"/>
    <property type="match status" value="1"/>
</dbReference>
<sequence length="148" mass="16970">MVMVLSPLLLVFILGLGLTPVAPAQDDYRYIHFLTQHYDAKPKGRNDEYCFNMMKNRRLTRPCKDRNTFIHGNKNDIKAICEDRNGQPYRGDLRISKSEFQITICKHKGGSSRPPCRYGATEDSRVIVVGCENGLPVHFDESFITPRH</sequence>
<comment type="function">
    <text evidence="1 2">Secreted ribonuclease that can either promote or restrict cell proliferation of target cells, depending on the context. Endocytosed in target cells via its receptor PLXNB2 and translocates to the cytoplasm or nucleus. Under stress conditions, localizes to the cytoplasm and promotes the assembly of stress granules (SGs): specifically cleaves a subset of tRNAs within anticodon loops to produce tRNA-derived stress-induced fragments (tiRNAs), resulting in translation repression and inhibition of cell proliferation (By similarity). tiRNas also prevent formation of apoptosome, thereby promoting cell survival (By similarity). Preferentially cleaves RNAs between a pyrimidine and an adenosine residue, suggesting that it cleaves the anticodon loop of tRNA(Ala) (32-UUAGCAU-38) after positions 33 and 36. Cleaves a subset of tRNAs, including tRNA(Ala), tRNA(Glu), tRNA(Gly), tRNA(Lys), tRNA(Val), tRNA(His), tRNA(Asp) and tRNA(Sec). Under growth conditions and in differentiated cells, translocates to the nucleus and stimulates ribosomal RNA (rRNA) transcription, including that containing the initiation site sequences of 45S rRNA, thereby promoting cell growth and proliferation. Angiogenin induces vascularization of normal and malignant tissues via its ability to promote rRNA transcription (By similarity).</text>
</comment>
<comment type="subunit">
    <text evidence="1">Homodimer. Interacts with RNH1; inhibiting ANG ribonuclease activity.</text>
</comment>
<comment type="subcellular location">
    <subcellularLocation>
        <location evidence="1">Secreted</location>
    </subcellularLocation>
    <subcellularLocation>
        <location evidence="1">Nucleus</location>
    </subcellularLocation>
    <subcellularLocation>
        <location evidence="1">Nucleus</location>
        <location evidence="1">Nucleolus</location>
    </subcellularLocation>
    <subcellularLocation>
        <location evidence="1">Cytoplasm</location>
        <location evidence="1">Stress granule</location>
    </subcellularLocation>
    <text evidence="1">The secreted protein is rapidly endocytosed by target cells following interaction with PLXNB2 receptor and translocated to the cytoplasm and nucleus. In the nucleus, accumulates in the nucleolus and binds to DNA.</text>
</comment>
<comment type="tissue specificity">
    <text evidence="3 4">Serum and milk.</text>
</comment>
<comment type="similarity">
    <text evidence="8">Belongs to the pancreatic ribonuclease family.</text>
</comment>
<gene>
    <name type="primary">ANG1</name>
    <name type="synonym">ANG</name>
</gene>
<organism>
    <name type="scientific">Bos taurus</name>
    <name type="common">Bovine</name>
    <dbReference type="NCBI Taxonomy" id="9913"/>
    <lineage>
        <taxon>Eukaryota</taxon>
        <taxon>Metazoa</taxon>
        <taxon>Chordata</taxon>
        <taxon>Craniata</taxon>
        <taxon>Vertebrata</taxon>
        <taxon>Euteleostomi</taxon>
        <taxon>Mammalia</taxon>
        <taxon>Eutheria</taxon>
        <taxon>Laurasiatheria</taxon>
        <taxon>Artiodactyla</taxon>
        <taxon>Ruminantia</taxon>
        <taxon>Pecora</taxon>
        <taxon>Bovidae</taxon>
        <taxon>Bovinae</taxon>
        <taxon>Bos</taxon>
    </lineage>
</organism>
<protein>
    <recommendedName>
        <fullName>Angiogenin-1</fullName>
        <ecNumber evidence="1">3.1.27.-</ecNumber>
    </recommendedName>
</protein>
<feature type="signal peptide" evidence="3 5">
    <location>
        <begin position="1"/>
        <end position="23"/>
    </location>
</feature>
<feature type="chain" id="PRO_0000030856" description="Angiogenin-1">
    <location>
        <begin position="24"/>
        <end position="148"/>
    </location>
</feature>
<feature type="short sequence motif" description="Nucleolar localization signal" evidence="1">
    <location>
        <begin position="55"/>
        <end position="59"/>
    </location>
</feature>
<feature type="active site" description="Proton acceptor" evidence="1">
    <location>
        <position position="37"/>
    </location>
</feature>
<feature type="active site" description="Proton donor" evidence="1">
    <location>
        <position position="138"/>
    </location>
</feature>
<feature type="binding site" evidence="1">
    <location>
        <position position="45"/>
    </location>
    <ligand>
        <name>tRNA</name>
        <dbReference type="ChEBI" id="CHEBI:17843"/>
    </ligand>
</feature>
<feature type="binding site" evidence="1">
    <location>
        <position position="105"/>
    </location>
    <ligand>
        <name>tRNA</name>
        <dbReference type="ChEBI" id="CHEBI:17843"/>
    </ligand>
</feature>
<feature type="binding site" evidence="1">
    <location>
        <position position="127"/>
    </location>
    <ligand>
        <name>tRNA</name>
        <dbReference type="ChEBI" id="CHEBI:17843"/>
    </ligand>
</feature>
<feature type="disulfide bond" evidence="6 7 9 10">
    <location>
        <begin position="50"/>
        <end position="105"/>
    </location>
</feature>
<feature type="disulfide bond" evidence="6 7 9 10">
    <location>
        <begin position="63"/>
        <end position="116"/>
    </location>
</feature>
<feature type="disulfide bond" evidence="6 7 9 10">
    <location>
        <begin position="81"/>
        <end position="131"/>
    </location>
</feature>
<feature type="helix" evidence="11">
    <location>
        <begin position="28"/>
        <end position="37"/>
    </location>
</feature>
<feature type="helix" evidence="11">
    <location>
        <begin position="47"/>
        <end position="56"/>
    </location>
</feature>
<feature type="turn" evidence="11">
    <location>
        <begin position="60"/>
        <end position="63"/>
    </location>
</feature>
<feature type="strand" evidence="11">
    <location>
        <begin position="65"/>
        <end position="70"/>
    </location>
</feature>
<feature type="helix" evidence="11">
    <location>
        <begin position="74"/>
        <end position="78"/>
    </location>
</feature>
<feature type="helix" evidence="11">
    <location>
        <begin position="79"/>
        <end position="81"/>
    </location>
</feature>
<feature type="turn" evidence="11">
    <location>
        <begin position="83"/>
        <end position="85"/>
    </location>
</feature>
<feature type="strand" evidence="11">
    <location>
        <begin position="86"/>
        <end position="89"/>
    </location>
</feature>
<feature type="turn" evidence="11">
    <location>
        <begin position="90"/>
        <end position="92"/>
    </location>
</feature>
<feature type="strand" evidence="11">
    <location>
        <begin position="93"/>
        <end position="98"/>
    </location>
</feature>
<feature type="strand" evidence="11">
    <location>
        <begin position="100"/>
        <end position="107"/>
    </location>
</feature>
<feature type="strand" evidence="11">
    <location>
        <begin position="112"/>
        <end position="115"/>
    </location>
</feature>
<feature type="strand" evidence="11">
    <location>
        <begin position="118"/>
        <end position="125"/>
    </location>
</feature>
<feature type="strand" evidence="11">
    <location>
        <begin position="128"/>
        <end position="132"/>
    </location>
</feature>
<feature type="strand" evidence="11">
    <location>
        <begin position="135"/>
        <end position="139"/>
    </location>
</feature>
<reference key="1">
    <citation type="submission" date="1999-03" db="EMBL/GenBank/DDBJ databases">
        <title>Cloning, sequencing, and expression of bovine angiogenin.</title>
        <authorList>
            <person name="Chang S.-I."/>
        </authorList>
    </citation>
    <scope>NUCLEOTIDE SEQUENCE [GENOMIC DNA]</scope>
    <source>
        <tissue>Liver</tissue>
    </source>
</reference>
<reference key="2">
    <citation type="journal article" date="1988" name="FEBS Lett.">
        <title>The complete amino acid sequence of bovine milk angiogenin.</title>
        <authorList>
            <person name="Maes P."/>
            <person name="Damart D."/>
            <person name="Rommens C."/>
            <person name="Montreuil J."/>
            <person name="Spik G."/>
            <person name="Tartar A."/>
        </authorList>
    </citation>
    <scope>SUBCELLULAR LOCATION</scope>
    <scope>PROTEIN SEQUENCE OF 24-148</scope>
    <source>
        <tissue>Milk</tissue>
    </source>
</reference>
<reference key="3">
    <citation type="journal article" date="1989" name="Biochemistry">
        <title>Amino acid sequence of bovine angiogenin.</title>
        <authorList>
            <person name="Bond M.D."/>
            <person name="Strydom D.J."/>
        </authorList>
    </citation>
    <scope>SUBCELLULAR LOCATION</scope>
    <scope>PROTEIN SEQUENCE OF 24-148</scope>
    <source>
        <tissue>Plasma</tissue>
    </source>
</reference>
<reference key="4">
    <citation type="journal article" date="1988" name="Biochemistry">
        <title>Isolation of bovine angiogenin using a placental ribonuclease inhibitor binding assay.</title>
        <authorList>
            <person name="Bond M.D."/>
            <person name="Vallee B.L."/>
        </authorList>
    </citation>
    <scope>SUBCELLULAR LOCATION</scope>
    <scope>PROTEIN SEQUENCE OF 25-55</scope>
    <source>
        <tissue>Plasma</tissue>
    </source>
</reference>
<reference key="5">
    <citation type="journal article" date="1995" name="Proc. Natl. Acad. Sci. U.S.A.">
        <title>Crystal structure of bovine angiogenin at 1.5-A resolution.</title>
        <authorList>
            <person name="Acharya K.R."/>
            <person name="Shapiro R."/>
            <person name="Riordan J.F."/>
            <person name="Vallee B.L."/>
        </authorList>
    </citation>
    <scope>X-RAY CRYSTALLOGRAPHY (1.5 ANGSTROMS) OF 24-148</scope>
    <scope>DISULFIDE BONDS</scope>
    <scope>DOMAIN</scope>
</reference>
<reference key="6">
    <citation type="journal article" date="1996" name="Biochemistry">
        <title>Solution structure of bovine angiogenin by 1H nuclear magnetic resonance spectroscopy.</title>
        <authorList>
            <person name="Lequin O."/>
            <person name="Albaret C."/>
            <person name="Bontems F."/>
            <person name="Spik G."/>
            <person name="Lallemand J.-Y."/>
        </authorList>
    </citation>
    <scope>STRUCTURE BY NMR OF 24-148</scope>
    <scope>DISULFIDE BONDS</scope>
</reference>
<name>ANG1_BOVIN</name>
<keyword id="KW-0002">3D-structure</keyword>
<keyword id="KW-0037">Angiogenesis</keyword>
<keyword id="KW-0963">Cytoplasm</keyword>
<keyword id="KW-0217">Developmental protein</keyword>
<keyword id="KW-0221">Differentiation</keyword>
<keyword id="KW-0903">Direct protein sequencing</keyword>
<keyword id="KW-1015">Disulfide bond</keyword>
<keyword id="KW-0238">DNA-binding</keyword>
<keyword id="KW-0255">Endonuclease</keyword>
<keyword id="KW-0378">Hydrolase</keyword>
<keyword id="KW-0540">Nuclease</keyword>
<keyword id="KW-0539">Nucleus</keyword>
<keyword id="KW-0652">Protein synthesis inhibitor</keyword>
<keyword id="KW-1185">Reference proteome</keyword>
<keyword id="KW-0964">Secreted</keyword>
<keyword id="KW-0732">Signal</keyword>
<keyword id="KW-0346">Stress response</keyword>